<reference key="1">
    <citation type="journal article" date="2004" name="Genome Res.">
        <title>The status, quality, and expansion of the NIH full-length cDNA project: the Mammalian Gene Collection (MGC).</title>
        <authorList>
            <consortium name="The MGC Project Team"/>
        </authorList>
    </citation>
    <scope>NUCLEOTIDE SEQUENCE [LARGE SCALE MRNA]</scope>
    <source>
        <tissue>Kidney</tissue>
    </source>
</reference>
<reference key="2">
    <citation type="journal article" date="2004" name="J. Biol. Chem.">
        <title>Molecular cloning of a sixth member of the K+-dependent Na+/Ca2+ exchanger gene family, NCKX6.</title>
        <authorList>
            <person name="Cai X."/>
            <person name="Lytton J."/>
        </authorList>
    </citation>
    <scope>TISSUE SPECIFICITY</scope>
</reference>
<reference key="3">
    <citation type="journal article" date="2004" name="J. Biol. Chem.">
        <title>Lithium-calcium exchange is mediated by a distinct potassium-independent sodium-calcium exchanger.</title>
        <authorList>
            <person name="Palty R."/>
            <person name="Ohana E."/>
            <person name="Hershfinkel M."/>
            <person name="Volokita M."/>
            <person name="Elgazar V."/>
            <person name="Beharier O."/>
            <person name="Silverman W.F."/>
            <person name="Argaman M."/>
            <person name="Sekler I."/>
        </authorList>
    </citation>
    <scope>SUBCELLULAR LOCATION</scope>
    <scope>TISSUE SPECIFICITY</scope>
</reference>
<reference key="4">
    <citation type="journal article" date="2010" name="Proc. Natl. Acad. Sci. U.S.A.">
        <title>NCLX is an essential component of mitochondrial Na+/Ca2+ exchange.</title>
        <authorList>
            <person name="Palty R."/>
            <person name="Silverman W.F."/>
            <person name="Hershfinkel M."/>
            <person name="Caporale T."/>
            <person name="Sensi S.L."/>
            <person name="Parnis J."/>
            <person name="Nolte C."/>
            <person name="Fishman D."/>
            <person name="Shoshan-Barmatz V."/>
            <person name="Herrmann S."/>
            <person name="Khananshvili D."/>
            <person name="Sekler I."/>
        </authorList>
    </citation>
    <scope>SUBCELLULAR LOCATION</scope>
</reference>
<protein>
    <recommendedName>
        <fullName evidence="9">Mitochondrial sodium/calcium exchanger protein</fullName>
    </recommendedName>
    <alternativeName>
        <fullName evidence="7">Na(+)/K(+)/Ca(2+)-exchange protein 6</fullName>
    </alternativeName>
    <alternativeName>
        <fullName evidence="8">Sodium/calcium exchanger protein, mitochondrial</fullName>
    </alternativeName>
    <alternativeName>
        <fullName evidence="7">Sodium/potassium/calcium exchanger 6</fullName>
    </alternativeName>
    <alternativeName>
        <fullName evidence="10">Solute carrier family 24 member 6</fullName>
    </alternativeName>
    <alternativeName>
        <fullName evidence="10">Solute carrier family 8 member B1</fullName>
    </alternativeName>
</protein>
<gene>
    <name evidence="10" type="primary">Slc8b1</name>
    <name evidence="7" type="synonym">Nckx6</name>
    <name evidence="8" type="synonym">Nclx</name>
    <name evidence="10" type="synonym">Slc24a6</name>
</gene>
<keyword id="KW-0050">Antiport</keyword>
<keyword id="KW-0106">Calcium</keyword>
<keyword id="KW-0109">Calcium transport</keyword>
<keyword id="KW-0325">Glycoprotein</keyword>
<keyword id="KW-0406">Ion transport</keyword>
<keyword id="KW-0452">Lithium</keyword>
<keyword id="KW-0472">Membrane</keyword>
<keyword id="KW-0496">Mitochondrion</keyword>
<keyword id="KW-0999">Mitochondrion inner membrane</keyword>
<keyword id="KW-0597">Phosphoprotein</keyword>
<keyword id="KW-1185">Reference proteome</keyword>
<keyword id="KW-0716">Sensory transduction</keyword>
<keyword id="KW-0732">Signal</keyword>
<keyword id="KW-0915">Sodium</keyword>
<keyword id="KW-0739">Sodium transport</keyword>
<keyword id="KW-0812">Transmembrane</keyword>
<keyword id="KW-1133">Transmembrane helix</keyword>
<keyword id="KW-0813">Transport</keyword>
<feature type="signal peptide" evidence="3">
    <location>
        <begin position="1"/>
        <end position="26"/>
    </location>
</feature>
<feature type="chain" id="PRO_0000045758" description="Mitochondrial sodium/calcium exchanger protein">
    <location>
        <begin position="27"/>
        <end position="585"/>
    </location>
</feature>
<feature type="topological domain" description="Extracellular" evidence="3">
    <location>
        <begin position="27"/>
        <end position="95"/>
    </location>
</feature>
<feature type="transmembrane region" description="Helical; Name=1" evidence="3">
    <location>
        <begin position="96"/>
        <end position="116"/>
    </location>
</feature>
<feature type="topological domain" description="Cytoplasmic" evidence="3">
    <location>
        <begin position="117"/>
        <end position="140"/>
    </location>
</feature>
<feature type="transmembrane region" description="Helical; Name=2" evidence="3">
    <location>
        <begin position="141"/>
        <end position="161"/>
    </location>
</feature>
<feature type="topological domain" description="Extracellular" evidence="3">
    <location>
        <begin position="162"/>
        <end position="168"/>
    </location>
</feature>
<feature type="transmembrane region" description="Helical; Name=3" evidence="3">
    <location>
        <begin position="169"/>
        <end position="189"/>
    </location>
</feature>
<feature type="topological domain" description="Cytoplasmic" evidence="3">
    <location>
        <begin position="190"/>
        <end position="205"/>
    </location>
</feature>
<feature type="transmembrane region" description="Helical; Name=4" evidence="3">
    <location>
        <begin position="206"/>
        <end position="226"/>
    </location>
</feature>
<feature type="topological domain" description="Extracellular" evidence="3">
    <location>
        <position position="227"/>
    </location>
</feature>
<feature type="transmembrane region" description="Helical; Name=5" evidence="3">
    <location>
        <begin position="228"/>
        <end position="247"/>
    </location>
</feature>
<feature type="topological domain" description="Cytoplasmic" evidence="3">
    <location>
        <begin position="248"/>
        <end position="325"/>
    </location>
</feature>
<feature type="transmembrane region" description="Helical; Name=6" evidence="3">
    <location>
        <begin position="326"/>
        <end position="346"/>
    </location>
</feature>
<feature type="topological domain" description="Extracellular" evidence="3">
    <location>
        <begin position="347"/>
        <end position="360"/>
    </location>
</feature>
<feature type="transmembrane region" description="Helical; Name=7" evidence="3">
    <location>
        <begin position="361"/>
        <end position="381"/>
    </location>
</feature>
<feature type="topological domain" description="Cytoplasmic" evidence="3">
    <location>
        <begin position="382"/>
        <end position="383"/>
    </location>
</feature>
<feature type="transmembrane region" description="Helical; Name=8" evidence="3">
    <location>
        <begin position="384"/>
        <end position="404"/>
    </location>
</feature>
<feature type="topological domain" description="Extracellular" evidence="3">
    <location>
        <begin position="405"/>
        <end position="416"/>
    </location>
</feature>
<feature type="transmembrane region" description="Helical; Name=9" evidence="3">
    <location>
        <begin position="417"/>
        <end position="437"/>
    </location>
</feature>
<feature type="topological domain" description="Cytoplasmic" evidence="3">
    <location>
        <begin position="438"/>
        <end position="445"/>
    </location>
</feature>
<feature type="transmembrane region" description="Helical; Name=10" evidence="3">
    <location>
        <begin position="446"/>
        <end position="466"/>
    </location>
</feature>
<feature type="topological domain" description="Extracellular" evidence="3">
    <location>
        <begin position="467"/>
        <end position="491"/>
    </location>
</feature>
<feature type="transmembrane region" description="Helical; Name=11" evidence="3">
    <location>
        <begin position="492"/>
        <end position="512"/>
    </location>
</feature>
<feature type="topological domain" description="Cytoplasmic" evidence="3">
    <location>
        <begin position="513"/>
        <end position="525"/>
    </location>
</feature>
<feature type="transmembrane region" description="Helical; Name=12" evidence="3">
    <location>
        <begin position="526"/>
        <end position="546"/>
    </location>
</feature>
<feature type="topological domain" description="Extracellular" evidence="3">
    <location>
        <begin position="547"/>
        <end position="559"/>
    </location>
</feature>
<feature type="transmembrane region" description="Helical; Name=13" evidence="3">
    <location>
        <begin position="560"/>
        <end position="580"/>
    </location>
</feature>
<feature type="topological domain" description="Cytoplasmic" evidence="3">
    <location>
        <begin position="581"/>
        <end position="585"/>
    </location>
</feature>
<feature type="modified residue" description="Phosphoserine; by PKA" evidence="1">
    <location>
        <position position="258"/>
    </location>
</feature>
<feature type="glycosylation site" description="N-linked (GlcNAc...) asparagine" evidence="3">
    <location>
        <position position="46"/>
    </location>
</feature>
<accession>Q6AXS0</accession>
<proteinExistence type="evidence at protein level"/>
<dbReference type="EMBL" id="BC079350">
    <property type="protein sequence ID" value="AAH79350.1"/>
    <property type="molecule type" value="mRNA"/>
</dbReference>
<dbReference type="RefSeq" id="NP_001017488.1">
    <property type="nucleotide sequence ID" value="NM_001017488.1"/>
</dbReference>
<dbReference type="RefSeq" id="XP_063127662.1">
    <property type="nucleotide sequence ID" value="XM_063271592.1"/>
</dbReference>
<dbReference type="FunCoup" id="Q6AXS0">
    <property type="interactions" value="136"/>
</dbReference>
<dbReference type="STRING" id="10116.ENSRNOP00000034026"/>
<dbReference type="GlyCosmos" id="Q6AXS0">
    <property type="glycosylation" value="1 site, No reported glycans"/>
</dbReference>
<dbReference type="GlyGen" id="Q6AXS0">
    <property type="glycosylation" value="1 site"/>
</dbReference>
<dbReference type="PhosphoSitePlus" id="Q6AXS0"/>
<dbReference type="PaxDb" id="10116-ENSRNOP00000034026"/>
<dbReference type="Ensembl" id="ENSRNOT00000038736.5">
    <property type="protein sequence ID" value="ENSRNOP00000034026.4"/>
    <property type="gene ID" value="ENSRNOG00000001383.7"/>
</dbReference>
<dbReference type="GeneID" id="498185"/>
<dbReference type="KEGG" id="rno:498185"/>
<dbReference type="UCSC" id="RGD:1565818">
    <property type="organism name" value="rat"/>
</dbReference>
<dbReference type="AGR" id="RGD:1565818"/>
<dbReference type="CTD" id="80024"/>
<dbReference type="RGD" id="1565818">
    <property type="gene designation" value="Slc8b1"/>
</dbReference>
<dbReference type="eggNOG" id="KOG2399">
    <property type="taxonomic scope" value="Eukaryota"/>
</dbReference>
<dbReference type="GeneTree" id="ENSGT00940000157433"/>
<dbReference type="HOGENOM" id="CLU_004979_3_2_1"/>
<dbReference type="InParanoid" id="Q6AXS0"/>
<dbReference type="OMA" id="VKQPIDM"/>
<dbReference type="OrthoDB" id="407410at2759"/>
<dbReference type="PhylomeDB" id="Q6AXS0"/>
<dbReference type="TreeFam" id="TF323444"/>
<dbReference type="Reactome" id="R-RNO-425561">
    <property type="pathway name" value="Sodium/Calcium exchangers"/>
</dbReference>
<dbReference type="Reactome" id="R-RNO-8949215">
    <property type="pathway name" value="Mitochondrial calcium ion transport"/>
</dbReference>
<dbReference type="PRO" id="PR:Q6AXS0"/>
<dbReference type="Proteomes" id="UP000002494">
    <property type="component" value="Chromosome 12"/>
</dbReference>
<dbReference type="Bgee" id="ENSRNOG00000001383">
    <property type="expression patterns" value="Expressed in spleen and 19 other cell types or tissues"/>
</dbReference>
<dbReference type="GO" id="GO:0016020">
    <property type="term" value="C:membrane"/>
    <property type="evidence" value="ECO:0000318"/>
    <property type="project" value="GO_Central"/>
</dbReference>
<dbReference type="GO" id="GO:0030061">
    <property type="term" value="C:mitochondrial crista"/>
    <property type="evidence" value="ECO:0000314"/>
    <property type="project" value="BHF-UCL"/>
</dbReference>
<dbReference type="GO" id="GO:0005743">
    <property type="term" value="C:mitochondrial inner membrane"/>
    <property type="evidence" value="ECO:0000314"/>
    <property type="project" value="MGI"/>
</dbReference>
<dbReference type="GO" id="GO:0031966">
    <property type="term" value="C:mitochondrial membrane"/>
    <property type="evidence" value="ECO:0000250"/>
    <property type="project" value="UniProtKB"/>
</dbReference>
<dbReference type="GO" id="GO:0005739">
    <property type="term" value="C:mitochondrion"/>
    <property type="evidence" value="ECO:0000314"/>
    <property type="project" value="BHF-UCL"/>
</dbReference>
<dbReference type="GO" id="GO:0005886">
    <property type="term" value="C:plasma membrane"/>
    <property type="evidence" value="ECO:0000266"/>
    <property type="project" value="RGD"/>
</dbReference>
<dbReference type="GO" id="GO:0042383">
    <property type="term" value="C:sarcolemma"/>
    <property type="evidence" value="ECO:0000314"/>
    <property type="project" value="MGI"/>
</dbReference>
<dbReference type="GO" id="GO:0005432">
    <property type="term" value="F:calcium:sodium antiporter activity"/>
    <property type="evidence" value="ECO:0000250"/>
    <property type="project" value="UniProtKB"/>
</dbReference>
<dbReference type="GO" id="GO:0086038">
    <property type="term" value="F:calcium:sodium antiporter activity involved in regulation of cardiac muscle cell membrane potential"/>
    <property type="evidence" value="ECO:0000250"/>
    <property type="project" value="UniProtKB"/>
</dbReference>
<dbReference type="GO" id="GO:0042802">
    <property type="term" value="F:identical protein binding"/>
    <property type="evidence" value="ECO:0000314"/>
    <property type="project" value="RGD"/>
</dbReference>
<dbReference type="GO" id="GO:0042803">
    <property type="term" value="F:protein homodimerization activity"/>
    <property type="evidence" value="ECO:0000353"/>
    <property type="project" value="BHF-UCL"/>
</dbReference>
<dbReference type="GO" id="GO:0099093">
    <property type="term" value="P:calcium export from the mitochondrion"/>
    <property type="evidence" value="ECO:0000250"/>
    <property type="project" value="UniProtKB"/>
</dbReference>
<dbReference type="GO" id="GO:0070588">
    <property type="term" value="P:calcium ion transmembrane transport"/>
    <property type="evidence" value="ECO:0000266"/>
    <property type="project" value="RGD"/>
</dbReference>
<dbReference type="GO" id="GO:0042593">
    <property type="term" value="P:glucose homeostasis"/>
    <property type="evidence" value="ECO:0000250"/>
    <property type="project" value="UniProtKB"/>
</dbReference>
<dbReference type="GO" id="GO:0006874">
    <property type="term" value="P:intracellular calcium ion homeostasis"/>
    <property type="evidence" value="ECO:0000318"/>
    <property type="project" value="GO_Central"/>
</dbReference>
<dbReference type="GO" id="GO:0051560">
    <property type="term" value="P:mitochondrial calcium ion homeostasis"/>
    <property type="evidence" value="ECO:0000250"/>
    <property type="project" value="UniProtKB"/>
</dbReference>
<dbReference type="GO" id="GO:0006851">
    <property type="term" value="P:mitochondrial calcium ion transmembrane transport"/>
    <property type="evidence" value="ECO:0000250"/>
    <property type="project" value="UniProtKB"/>
</dbReference>
<dbReference type="GO" id="GO:0086036">
    <property type="term" value="P:regulation of cardiac muscle cell membrane potential"/>
    <property type="evidence" value="ECO:0000266"/>
    <property type="project" value="RGD"/>
</dbReference>
<dbReference type="GO" id="GO:0051480">
    <property type="term" value="P:regulation of cytosolic calcium ion concentration"/>
    <property type="evidence" value="ECO:0000250"/>
    <property type="project" value="BHF-UCL"/>
</dbReference>
<dbReference type="GO" id="GO:0050796">
    <property type="term" value="P:regulation of insulin secretion"/>
    <property type="evidence" value="ECO:0000250"/>
    <property type="project" value="UniProtKB"/>
</dbReference>
<dbReference type="GO" id="GO:1901623">
    <property type="term" value="P:regulation of lymphocyte chemotaxis"/>
    <property type="evidence" value="ECO:0000250"/>
    <property type="project" value="UniProtKB"/>
</dbReference>
<dbReference type="GO" id="GO:2001256">
    <property type="term" value="P:regulation of store-operated calcium entry"/>
    <property type="evidence" value="ECO:0000250"/>
    <property type="project" value="UniProtKB"/>
</dbReference>
<dbReference type="GO" id="GO:0035725">
    <property type="term" value="P:sodium ion transmembrane transport"/>
    <property type="evidence" value="ECO:0000266"/>
    <property type="project" value="RGD"/>
</dbReference>
<dbReference type="FunFam" id="1.20.1420.30:FF:000023">
    <property type="entry name" value="Mitochondrial sodium/calcium exchanger protein"/>
    <property type="match status" value="1"/>
</dbReference>
<dbReference type="FunFam" id="1.20.1420.30:FF:000025">
    <property type="entry name" value="sodium/potassium/calcium exchanger 6, mitochondrial isoform X3"/>
    <property type="match status" value="1"/>
</dbReference>
<dbReference type="Gene3D" id="1.20.1420.30">
    <property type="entry name" value="NCX, central ion-binding region"/>
    <property type="match status" value="2"/>
</dbReference>
<dbReference type="InterPro" id="IPR051359">
    <property type="entry name" value="CaCA_antiporter"/>
</dbReference>
<dbReference type="InterPro" id="IPR004837">
    <property type="entry name" value="NaCa_Exmemb"/>
</dbReference>
<dbReference type="InterPro" id="IPR044880">
    <property type="entry name" value="NCX_ion-bd_dom_sf"/>
</dbReference>
<dbReference type="PANTHER" id="PTHR12266:SF0">
    <property type="entry name" value="MITOCHONDRIAL SODIUM_CALCIUM EXCHANGER PROTEIN"/>
    <property type="match status" value="1"/>
</dbReference>
<dbReference type="PANTHER" id="PTHR12266">
    <property type="entry name" value="NA+/CA2+ K+ INDEPENDENT EXCHANGER"/>
    <property type="match status" value="1"/>
</dbReference>
<dbReference type="Pfam" id="PF01699">
    <property type="entry name" value="Na_Ca_ex"/>
    <property type="match status" value="2"/>
</dbReference>
<sequence length="585" mass="63992">MAGRWLDPLWAPGFLCVALILETASGAGDLSTKAHGHIQFSARGVNQTAMADCRAVCSLNTSDRCDFVKRNPDCHSEGGYLDYLKGIFCYFPPNLLPLAITLYVFWLLYLFLILGVTAAKFFCPNLSAISTSLKLSHNVAGVTFLAFGNGAPDIFSALVAFSDPRTAGLAIGALFGAGVLVTTVVAGGITILRPFMAASRPFLRDITFYMVAVFLTFTALYLGRITLVWALGYLGLYVFYVVTVIICTWVYQRQRSRSLVHSISETPELLTDSEEDQMSSNTNSYDYGEEYRPLLLGEETTGQILLQALNPLDYRKWRTQSISCKLLKVAKLPVEFLLLLTVPVVDPDKDDRNWKRPLNCLQLVISPLVLVLTLQSGVYGIYEIGGLLPVWAVVVIVGTALASVTFFATSNSEPPRLHWLFAFLGFLTSALWINAAATEVVNILRSLGVVFRLSNTVLGLTLLAWGNSIGDAFSDFTLARQGYPRMAFSACFGGIIFNILVGVGLGCLLQIVRSHASEVKLEPDGLLVWVLASALGLSLVFSLVSVPLQCFQLSKAYGLCLLLFYICFIVVVLLTEFGVIHLKAD</sequence>
<evidence type="ECO:0000250" key="1">
    <source>
        <dbReference type="UniProtKB" id="Q6J4K2"/>
    </source>
</evidence>
<evidence type="ECO:0000250" key="2">
    <source>
        <dbReference type="UniProtKB" id="Q925Q3"/>
    </source>
</evidence>
<evidence type="ECO:0000255" key="3"/>
<evidence type="ECO:0000269" key="4">
    <source>
    </source>
</evidence>
<evidence type="ECO:0000269" key="5">
    <source>
    </source>
</evidence>
<evidence type="ECO:0000269" key="6">
    <source>
    </source>
</evidence>
<evidence type="ECO:0000303" key="7">
    <source>
    </source>
</evidence>
<evidence type="ECO:0000303" key="8">
    <source>
    </source>
</evidence>
<evidence type="ECO:0000305" key="9"/>
<evidence type="ECO:0000312" key="10">
    <source>
        <dbReference type="RGD" id="1565818"/>
    </source>
</evidence>
<organism>
    <name type="scientific">Rattus norvegicus</name>
    <name type="common">Rat</name>
    <dbReference type="NCBI Taxonomy" id="10116"/>
    <lineage>
        <taxon>Eukaryota</taxon>
        <taxon>Metazoa</taxon>
        <taxon>Chordata</taxon>
        <taxon>Craniata</taxon>
        <taxon>Vertebrata</taxon>
        <taxon>Euteleostomi</taxon>
        <taxon>Mammalia</taxon>
        <taxon>Eutheria</taxon>
        <taxon>Euarchontoglires</taxon>
        <taxon>Glires</taxon>
        <taxon>Rodentia</taxon>
        <taxon>Myomorpha</taxon>
        <taxon>Muroidea</taxon>
        <taxon>Muridae</taxon>
        <taxon>Murinae</taxon>
        <taxon>Rattus</taxon>
    </lineage>
</organism>
<comment type="function">
    <text evidence="1 2">Mitochondrial sodium/calcium antiporter that mediates sodium-dependent calcium efflux from mitochondrion, by mediating the exchange of 3 sodium ions per 1 calcium ion. Plays a central role in mitochondrial calcium homeostasis by mediating mitochondrial calcium extrusion: calcium efflux is essential for mitochondrial function and cell survival, notably in cardiomyocytes (By similarity). Regulates rates of glucose-dependent insulin secretion in pancreatic beta-cells during the first phase of insulin secretion: acts by mediating efflux of calcium from mitochondrion, thereby affecting cytoplasmic calcium responses. Required for store-operated Ca(2+) entry (SOCE) and Ca(2+) release-activated Ca(2+) (CRAC) channel regulation: sodium transport by SLC8B1 leads to promote calcium-shuttling that modulates mitochondrial redox status, thereby regulating SOCE activity (By similarity). Involved in B-lymphocyte chemotaxis (By similarity). Able to transport Ca(2+) in exchange of either Li(+) or Na(+), explaining how Li(+) catalyzes Ca(2+) exchange. In contrast to other members of the family its function is independent of K(+) (By similarity).</text>
</comment>
<comment type="catalytic activity">
    <reaction evidence="1">
        <text>Ca(2+)(in) + 3 Na(+)(out) = Ca(2+)(out) + 3 Na(+)(in)</text>
        <dbReference type="Rhea" id="RHEA:69955"/>
        <dbReference type="ChEBI" id="CHEBI:29101"/>
        <dbReference type="ChEBI" id="CHEBI:29108"/>
    </reaction>
</comment>
<comment type="catalytic activity">
    <reaction evidence="1">
        <text>3 Li(+)(out) + Ca(2+)(in) = 3 Li(+)(in) + Ca(2+)(out)</text>
        <dbReference type="Rhea" id="RHEA:72631"/>
        <dbReference type="ChEBI" id="CHEBI:29108"/>
        <dbReference type="ChEBI" id="CHEBI:49713"/>
    </reaction>
</comment>
<comment type="activity regulation">
    <text evidence="1">Inhibited by the sodium/calcium exchanger inhibitor CGP-37157. Strongly inhibited by zinc.</text>
</comment>
<comment type="subcellular location">
    <subcellularLocation>
        <location evidence="5 6">Mitochondrion inner membrane</location>
        <topology evidence="5 6">Multi-pass membrane protein</topology>
    </subcellularLocation>
</comment>
<comment type="tissue specificity">
    <text evidence="4 5">Widely expressed. Present at higher level in pancreas, stomach, skeletal muscle and skin (at protein level). Ubiquitously expressed.</text>
</comment>
<comment type="PTM">
    <text evidence="1">Phosphorylation at Ser-258 by PKA prevents calcium overload.</text>
</comment>
<comment type="similarity">
    <text evidence="9">Belongs to the Ca(2+):cation antiporter (CaCA) (TC 2.A.19) family. SLC24A subfamily.</text>
</comment>
<name>NCLX_RAT</name>